<proteinExistence type="inferred from homology"/>
<organism>
    <name type="scientific">Thioalkalivibrio sulfidiphilus (strain HL-EbGR7)</name>
    <dbReference type="NCBI Taxonomy" id="396588"/>
    <lineage>
        <taxon>Bacteria</taxon>
        <taxon>Pseudomonadati</taxon>
        <taxon>Pseudomonadota</taxon>
        <taxon>Gammaproteobacteria</taxon>
        <taxon>Chromatiales</taxon>
        <taxon>Ectothiorhodospiraceae</taxon>
        <taxon>Thioalkalivibrio</taxon>
    </lineage>
</organism>
<protein>
    <recommendedName>
        <fullName evidence="1">Tryptophan synthase alpha chain</fullName>
        <ecNumber evidence="1">4.2.1.20</ecNumber>
    </recommendedName>
</protein>
<keyword id="KW-0028">Amino-acid biosynthesis</keyword>
<keyword id="KW-0057">Aromatic amino acid biosynthesis</keyword>
<keyword id="KW-0456">Lyase</keyword>
<keyword id="KW-1185">Reference proteome</keyword>
<keyword id="KW-0822">Tryptophan biosynthesis</keyword>
<evidence type="ECO:0000255" key="1">
    <source>
        <dbReference type="HAMAP-Rule" id="MF_00131"/>
    </source>
</evidence>
<reference key="1">
    <citation type="journal article" date="2011" name="Stand. Genomic Sci.">
        <title>Complete genome sequence of 'Thioalkalivibrio sulfidophilus' HL-EbGr7.</title>
        <authorList>
            <person name="Muyzer G."/>
            <person name="Sorokin D.Y."/>
            <person name="Mavromatis K."/>
            <person name="Lapidus A."/>
            <person name="Clum A."/>
            <person name="Ivanova N."/>
            <person name="Pati A."/>
            <person name="d'Haeseleer P."/>
            <person name="Woyke T."/>
            <person name="Kyrpides N.C."/>
        </authorList>
    </citation>
    <scope>NUCLEOTIDE SEQUENCE [LARGE SCALE GENOMIC DNA]</scope>
    <source>
        <strain>HL-EbGR7</strain>
    </source>
</reference>
<feature type="chain" id="PRO_1000198732" description="Tryptophan synthase alpha chain">
    <location>
        <begin position="1"/>
        <end position="266"/>
    </location>
</feature>
<feature type="active site" description="Proton acceptor" evidence="1">
    <location>
        <position position="49"/>
    </location>
</feature>
<feature type="active site" description="Proton acceptor" evidence="1">
    <location>
        <position position="60"/>
    </location>
</feature>
<sequence length="266" mass="28377">MSRIARRFEALRAAGRKALIPYVTAGDPNPDNTVPLMHAMVAAGADIIELGVPFSDPMADGPVIQQACERALRHHVSLRQVIGMVKTFREQDAETPVVLMGYLNPVEIMGYEAFAIAAASAGVDGLLTVDLPPEESHDLVQVLRSHGVDPIFLLAPTSHEARIKRICDAASGFVYYVSLKGVTGAATLDVDAVAEKLAAIRAHTDLPLGVGFGIRDADSAARVSRVADAVVVGSALVNRIAEHEQDPEAGRRVVSELLAEMRKAMD</sequence>
<accession>B8GQE5</accession>
<gene>
    <name evidence="1" type="primary">trpA</name>
    <name type="ordered locus">Tgr7_1254</name>
</gene>
<name>TRPA_THISH</name>
<dbReference type="EC" id="4.2.1.20" evidence="1"/>
<dbReference type="EMBL" id="CP001339">
    <property type="protein sequence ID" value="ACL72340.1"/>
    <property type="molecule type" value="Genomic_DNA"/>
</dbReference>
<dbReference type="RefSeq" id="WP_012637823.1">
    <property type="nucleotide sequence ID" value="NC_011901.1"/>
</dbReference>
<dbReference type="SMR" id="B8GQE5"/>
<dbReference type="STRING" id="396588.Tgr7_1254"/>
<dbReference type="KEGG" id="tgr:Tgr7_1254"/>
<dbReference type="eggNOG" id="COG0159">
    <property type="taxonomic scope" value="Bacteria"/>
</dbReference>
<dbReference type="HOGENOM" id="CLU_016734_0_0_6"/>
<dbReference type="OrthoDB" id="9804578at2"/>
<dbReference type="UniPathway" id="UPA00035">
    <property type="reaction ID" value="UER00044"/>
</dbReference>
<dbReference type="Proteomes" id="UP000002383">
    <property type="component" value="Chromosome"/>
</dbReference>
<dbReference type="GO" id="GO:0005829">
    <property type="term" value="C:cytosol"/>
    <property type="evidence" value="ECO:0007669"/>
    <property type="project" value="TreeGrafter"/>
</dbReference>
<dbReference type="GO" id="GO:0004834">
    <property type="term" value="F:tryptophan synthase activity"/>
    <property type="evidence" value="ECO:0007669"/>
    <property type="project" value="UniProtKB-UniRule"/>
</dbReference>
<dbReference type="CDD" id="cd04724">
    <property type="entry name" value="Tryptophan_synthase_alpha"/>
    <property type="match status" value="1"/>
</dbReference>
<dbReference type="FunFam" id="3.20.20.70:FF:000037">
    <property type="entry name" value="Tryptophan synthase alpha chain"/>
    <property type="match status" value="1"/>
</dbReference>
<dbReference type="Gene3D" id="3.20.20.70">
    <property type="entry name" value="Aldolase class I"/>
    <property type="match status" value="1"/>
</dbReference>
<dbReference type="HAMAP" id="MF_00131">
    <property type="entry name" value="Trp_synth_alpha"/>
    <property type="match status" value="1"/>
</dbReference>
<dbReference type="InterPro" id="IPR013785">
    <property type="entry name" value="Aldolase_TIM"/>
</dbReference>
<dbReference type="InterPro" id="IPR011060">
    <property type="entry name" value="RibuloseP-bd_barrel"/>
</dbReference>
<dbReference type="InterPro" id="IPR018204">
    <property type="entry name" value="Trp_synthase_alpha_AS"/>
</dbReference>
<dbReference type="InterPro" id="IPR002028">
    <property type="entry name" value="Trp_synthase_suA"/>
</dbReference>
<dbReference type="NCBIfam" id="TIGR00262">
    <property type="entry name" value="trpA"/>
    <property type="match status" value="1"/>
</dbReference>
<dbReference type="PANTHER" id="PTHR43406:SF1">
    <property type="entry name" value="TRYPTOPHAN SYNTHASE ALPHA CHAIN, CHLOROPLASTIC"/>
    <property type="match status" value="1"/>
</dbReference>
<dbReference type="PANTHER" id="PTHR43406">
    <property type="entry name" value="TRYPTOPHAN SYNTHASE, ALPHA CHAIN"/>
    <property type="match status" value="1"/>
</dbReference>
<dbReference type="Pfam" id="PF00290">
    <property type="entry name" value="Trp_syntA"/>
    <property type="match status" value="1"/>
</dbReference>
<dbReference type="SUPFAM" id="SSF51366">
    <property type="entry name" value="Ribulose-phoshate binding barrel"/>
    <property type="match status" value="1"/>
</dbReference>
<dbReference type="PROSITE" id="PS00167">
    <property type="entry name" value="TRP_SYNTHASE_ALPHA"/>
    <property type="match status" value="1"/>
</dbReference>
<comment type="function">
    <text evidence="1">The alpha subunit is responsible for the aldol cleavage of indoleglycerol phosphate to indole and glyceraldehyde 3-phosphate.</text>
</comment>
<comment type="catalytic activity">
    <reaction evidence="1">
        <text>(1S,2R)-1-C-(indol-3-yl)glycerol 3-phosphate + L-serine = D-glyceraldehyde 3-phosphate + L-tryptophan + H2O</text>
        <dbReference type="Rhea" id="RHEA:10532"/>
        <dbReference type="ChEBI" id="CHEBI:15377"/>
        <dbReference type="ChEBI" id="CHEBI:33384"/>
        <dbReference type="ChEBI" id="CHEBI:57912"/>
        <dbReference type="ChEBI" id="CHEBI:58866"/>
        <dbReference type="ChEBI" id="CHEBI:59776"/>
        <dbReference type="EC" id="4.2.1.20"/>
    </reaction>
</comment>
<comment type="pathway">
    <text evidence="1">Amino-acid biosynthesis; L-tryptophan biosynthesis; L-tryptophan from chorismate: step 5/5.</text>
</comment>
<comment type="subunit">
    <text evidence="1">Tetramer of two alpha and two beta chains.</text>
</comment>
<comment type="similarity">
    <text evidence="1">Belongs to the TrpA family.</text>
</comment>